<reference key="1">
    <citation type="journal article" date="2003" name="Nat. Biotechnol.">
        <title>The genome sequence of the entomopathogenic bacterium Photorhabdus luminescens.</title>
        <authorList>
            <person name="Duchaud E."/>
            <person name="Rusniok C."/>
            <person name="Frangeul L."/>
            <person name="Buchrieser C."/>
            <person name="Givaudan A."/>
            <person name="Taourit S."/>
            <person name="Bocs S."/>
            <person name="Boursaux-Eude C."/>
            <person name="Chandler M."/>
            <person name="Charles J.-F."/>
            <person name="Dassa E."/>
            <person name="Derose R."/>
            <person name="Derzelle S."/>
            <person name="Freyssinet G."/>
            <person name="Gaudriault S."/>
            <person name="Medigue C."/>
            <person name="Lanois A."/>
            <person name="Powell K."/>
            <person name="Siguier P."/>
            <person name="Vincent R."/>
            <person name="Wingate V."/>
            <person name="Zouine M."/>
            <person name="Glaser P."/>
            <person name="Boemare N."/>
            <person name="Danchin A."/>
            <person name="Kunst F."/>
        </authorList>
    </citation>
    <scope>NUCLEOTIDE SEQUENCE [LARGE SCALE GENOMIC DNA]</scope>
    <source>
        <strain>DSM 15139 / CIP 105565 / TT01</strain>
    </source>
</reference>
<dbReference type="EC" id="1.1.1.290" evidence="1"/>
<dbReference type="EMBL" id="BX571869">
    <property type="protein sequence ID" value="CAE15549.1"/>
    <property type="molecule type" value="Genomic_DNA"/>
</dbReference>
<dbReference type="RefSeq" id="WP_011147383.1">
    <property type="nucleotide sequence ID" value="NC_005126.1"/>
</dbReference>
<dbReference type="SMR" id="Q7N2B2"/>
<dbReference type="STRING" id="243265.plu3175"/>
<dbReference type="GeneID" id="48849433"/>
<dbReference type="KEGG" id="plu:plu3175"/>
<dbReference type="eggNOG" id="COG0111">
    <property type="taxonomic scope" value="Bacteria"/>
</dbReference>
<dbReference type="HOGENOM" id="CLU_019796_4_0_6"/>
<dbReference type="OrthoDB" id="9770208at2"/>
<dbReference type="BRENDA" id="1.1.1.290">
    <property type="organism ID" value="4782"/>
</dbReference>
<dbReference type="UniPathway" id="UPA00244">
    <property type="reaction ID" value="UER00310"/>
</dbReference>
<dbReference type="Proteomes" id="UP000002514">
    <property type="component" value="Chromosome"/>
</dbReference>
<dbReference type="GO" id="GO:0005829">
    <property type="term" value="C:cytosol"/>
    <property type="evidence" value="ECO:0007669"/>
    <property type="project" value="TreeGrafter"/>
</dbReference>
<dbReference type="GO" id="GO:0033711">
    <property type="term" value="F:4-phosphoerythronate dehydrogenase activity"/>
    <property type="evidence" value="ECO:0007669"/>
    <property type="project" value="UniProtKB-EC"/>
</dbReference>
<dbReference type="GO" id="GO:0051287">
    <property type="term" value="F:NAD binding"/>
    <property type="evidence" value="ECO:0007669"/>
    <property type="project" value="InterPro"/>
</dbReference>
<dbReference type="GO" id="GO:0046983">
    <property type="term" value="F:protein dimerization activity"/>
    <property type="evidence" value="ECO:0007669"/>
    <property type="project" value="InterPro"/>
</dbReference>
<dbReference type="GO" id="GO:0036001">
    <property type="term" value="P:'de novo' pyridoxal 5'-phosphate biosynthetic process"/>
    <property type="evidence" value="ECO:0007669"/>
    <property type="project" value="TreeGrafter"/>
</dbReference>
<dbReference type="GO" id="GO:0008615">
    <property type="term" value="P:pyridoxine biosynthetic process"/>
    <property type="evidence" value="ECO:0007669"/>
    <property type="project" value="UniProtKB-UniRule"/>
</dbReference>
<dbReference type="CDD" id="cd12158">
    <property type="entry name" value="ErythrP_dh"/>
    <property type="match status" value="1"/>
</dbReference>
<dbReference type="FunFam" id="3.40.50.720:FF:000093">
    <property type="entry name" value="Erythronate-4-phosphate dehydrogenase"/>
    <property type="match status" value="1"/>
</dbReference>
<dbReference type="Gene3D" id="3.30.1370.170">
    <property type="match status" value="1"/>
</dbReference>
<dbReference type="Gene3D" id="3.40.50.720">
    <property type="entry name" value="NAD(P)-binding Rossmann-like Domain"/>
    <property type="match status" value="2"/>
</dbReference>
<dbReference type="HAMAP" id="MF_01825">
    <property type="entry name" value="PdxB"/>
    <property type="match status" value="1"/>
</dbReference>
<dbReference type="InterPro" id="IPR006139">
    <property type="entry name" value="D-isomer_2_OHA_DH_cat_dom"/>
</dbReference>
<dbReference type="InterPro" id="IPR029753">
    <property type="entry name" value="D-isomer_DH_CS"/>
</dbReference>
<dbReference type="InterPro" id="IPR029752">
    <property type="entry name" value="D-isomer_DH_CS1"/>
</dbReference>
<dbReference type="InterPro" id="IPR006140">
    <property type="entry name" value="D-isomer_DH_NAD-bd"/>
</dbReference>
<dbReference type="InterPro" id="IPR020921">
    <property type="entry name" value="Erythronate-4-P_DHase"/>
</dbReference>
<dbReference type="InterPro" id="IPR024531">
    <property type="entry name" value="Erythronate-4-P_DHase_dimer"/>
</dbReference>
<dbReference type="InterPro" id="IPR036291">
    <property type="entry name" value="NAD(P)-bd_dom_sf"/>
</dbReference>
<dbReference type="InterPro" id="IPR038251">
    <property type="entry name" value="PdxB_dimer_sf"/>
</dbReference>
<dbReference type="NCBIfam" id="NF001309">
    <property type="entry name" value="PRK00257.1"/>
    <property type="match status" value="1"/>
</dbReference>
<dbReference type="PANTHER" id="PTHR42938">
    <property type="entry name" value="FORMATE DEHYDROGENASE 1"/>
    <property type="match status" value="1"/>
</dbReference>
<dbReference type="PANTHER" id="PTHR42938:SF9">
    <property type="entry name" value="FORMATE DEHYDROGENASE 1"/>
    <property type="match status" value="1"/>
</dbReference>
<dbReference type="Pfam" id="PF00389">
    <property type="entry name" value="2-Hacid_dh"/>
    <property type="match status" value="1"/>
</dbReference>
<dbReference type="Pfam" id="PF02826">
    <property type="entry name" value="2-Hacid_dh_C"/>
    <property type="match status" value="1"/>
</dbReference>
<dbReference type="Pfam" id="PF11890">
    <property type="entry name" value="DUF3410"/>
    <property type="match status" value="1"/>
</dbReference>
<dbReference type="SUPFAM" id="SSF52283">
    <property type="entry name" value="Formate/glycerate dehydrogenase catalytic domain-like"/>
    <property type="match status" value="1"/>
</dbReference>
<dbReference type="SUPFAM" id="SSF51735">
    <property type="entry name" value="NAD(P)-binding Rossmann-fold domains"/>
    <property type="match status" value="1"/>
</dbReference>
<dbReference type="PROSITE" id="PS00065">
    <property type="entry name" value="D_2_HYDROXYACID_DH_1"/>
    <property type="match status" value="1"/>
</dbReference>
<dbReference type="PROSITE" id="PS00671">
    <property type="entry name" value="D_2_HYDROXYACID_DH_3"/>
    <property type="match status" value="1"/>
</dbReference>
<name>PDXB_PHOLL</name>
<protein>
    <recommendedName>
        <fullName evidence="1">Erythronate-4-phosphate dehydrogenase</fullName>
        <ecNumber evidence="1">1.1.1.290</ecNumber>
    </recommendedName>
</protein>
<organism>
    <name type="scientific">Photorhabdus laumondii subsp. laumondii (strain DSM 15139 / CIP 105565 / TT01)</name>
    <name type="common">Photorhabdus luminescens subsp. laumondii</name>
    <dbReference type="NCBI Taxonomy" id="243265"/>
    <lineage>
        <taxon>Bacteria</taxon>
        <taxon>Pseudomonadati</taxon>
        <taxon>Pseudomonadota</taxon>
        <taxon>Gammaproteobacteria</taxon>
        <taxon>Enterobacterales</taxon>
        <taxon>Morganellaceae</taxon>
        <taxon>Photorhabdus</taxon>
    </lineage>
</organism>
<accession>Q7N2B2</accession>
<gene>
    <name evidence="1" type="primary">pdxB</name>
    <name type="ordered locus">plu3175</name>
</gene>
<comment type="function">
    <text evidence="1">Catalyzes the oxidation of erythronate-4-phosphate to 3-hydroxy-2-oxo-4-phosphonooxybutanoate.</text>
</comment>
<comment type="catalytic activity">
    <reaction evidence="1">
        <text>4-phospho-D-erythronate + NAD(+) = (R)-3-hydroxy-2-oxo-4-phosphooxybutanoate + NADH + H(+)</text>
        <dbReference type="Rhea" id="RHEA:18829"/>
        <dbReference type="ChEBI" id="CHEBI:15378"/>
        <dbReference type="ChEBI" id="CHEBI:57540"/>
        <dbReference type="ChEBI" id="CHEBI:57945"/>
        <dbReference type="ChEBI" id="CHEBI:58538"/>
        <dbReference type="ChEBI" id="CHEBI:58766"/>
        <dbReference type="EC" id="1.1.1.290"/>
    </reaction>
</comment>
<comment type="pathway">
    <text evidence="1">Cofactor biosynthesis; pyridoxine 5'-phosphate biosynthesis; pyridoxine 5'-phosphate from D-erythrose 4-phosphate: step 2/5.</text>
</comment>
<comment type="subunit">
    <text evidence="1">Homodimer.</text>
</comment>
<comment type="subcellular location">
    <subcellularLocation>
        <location evidence="1">Cytoplasm</location>
    </subcellularLocation>
</comment>
<comment type="similarity">
    <text evidence="1">Belongs to the D-isomer specific 2-hydroxyacid dehydrogenase family. PdxB subfamily.</text>
</comment>
<proteinExistence type="inferred from homology"/>
<evidence type="ECO:0000255" key="1">
    <source>
        <dbReference type="HAMAP-Rule" id="MF_01825"/>
    </source>
</evidence>
<sequence length="375" mass="41413">MKILVDENMPYADQLFQQLGDVQAIPGRPVPEGVLDHADAFMVRSVTKVNEELLKGRAVKFIGTATAGTDHVDQSWLSQAGIGFSAAPGCNAIAVVEYVFSALMLLAERDNFELKDKVVGIVGVGNVGSRLAERLAVLGIRTLLCDPPRADRGDAGEFWSLEKLVKEADILTFHTPLNKSGPYKTHHLVDVELLSVLPDNRILINASRGEVIDNQALLTALKCGKKLRVVLDVWEPEPDLSLPLLELVDIGTPHIAGYTLEGKARGTTQVFEAYCEFLGQPRKVALSDLLPEPDFSRVTLHGNVTQSTLKRLMHLVYDVRRDDTPLRQVAGQKGQFDYLRKNYLERREWSSLTVCCDNRESAELLAALGFSTELI</sequence>
<keyword id="KW-0963">Cytoplasm</keyword>
<keyword id="KW-0520">NAD</keyword>
<keyword id="KW-0560">Oxidoreductase</keyword>
<keyword id="KW-0664">Pyridoxine biosynthesis</keyword>
<keyword id="KW-1185">Reference proteome</keyword>
<feature type="chain" id="PRO_0000075979" description="Erythronate-4-phosphate dehydrogenase">
    <location>
        <begin position="1"/>
        <end position="375"/>
    </location>
</feature>
<feature type="active site" evidence="1">
    <location>
        <position position="208"/>
    </location>
</feature>
<feature type="active site" evidence="1">
    <location>
        <position position="237"/>
    </location>
</feature>
<feature type="active site" description="Proton donor" evidence="1">
    <location>
        <position position="254"/>
    </location>
</feature>
<feature type="binding site" evidence="1">
    <location>
        <position position="45"/>
    </location>
    <ligand>
        <name>substrate</name>
    </ligand>
</feature>
<feature type="binding site" evidence="1">
    <location>
        <position position="66"/>
    </location>
    <ligand>
        <name>substrate</name>
    </ligand>
</feature>
<feature type="binding site" evidence="1">
    <location>
        <position position="146"/>
    </location>
    <ligand>
        <name>NAD(+)</name>
        <dbReference type="ChEBI" id="CHEBI:57540"/>
    </ligand>
</feature>
<feature type="binding site" evidence="1">
    <location>
        <position position="175"/>
    </location>
    <ligand>
        <name>NAD(+)</name>
        <dbReference type="ChEBI" id="CHEBI:57540"/>
    </ligand>
</feature>
<feature type="binding site" evidence="1">
    <location>
        <begin position="206"/>
        <end position="208"/>
    </location>
    <ligand>
        <name>NAD(+)</name>
        <dbReference type="ChEBI" id="CHEBI:57540"/>
    </ligand>
</feature>
<feature type="binding site" evidence="1">
    <location>
        <position position="232"/>
    </location>
    <ligand>
        <name>NAD(+)</name>
        <dbReference type="ChEBI" id="CHEBI:57540"/>
    </ligand>
</feature>
<feature type="binding site" evidence="1">
    <location>
        <position position="257"/>
    </location>
    <ligand>
        <name>NAD(+)</name>
        <dbReference type="ChEBI" id="CHEBI:57540"/>
    </ligand>
</feature>
<feature type="binding site" evidence="1">
    <location>
        <position position="258"/>
    </location>
    <ligand>
        <name>substrate</name>
    </ligand>
</feature>